<protein>
    <recommendedName>
        <fullName evidence="1">Nucleoid-associated protein P9211_00201</fullName>
    </recommendedName>
</protein>
<proteinExistence type="inferred from homology"/>
<comment type="function">
    <text evidence="1">Binds to DNA and alters its conformation. May be involved in regulation of gene expression, nucleoid organization and DNA protection.</text>
</comment>
<comment type="subunit">
    <text evidence="1">Homodimer.</text>
</comment>
<comment type="subcellular location">
    <subcellularLocation>
        <location evidence="1">Cytoplasm</location>
        <location evidence="1">Nucleoid</location>
    </subcellularLocation>
</comment>
<comment type="similarity">
    <text evidence="1">Belongs to the YbaB/EbfC family.</text>
</comment>
<gene>
    <name type="ordered locus">P9211_00201</name>
</gene>
<name>Y020_PROM4</name>
<feature type="chain" id="PRO_1000114633" description="Nucleoid-associated protein P9211_00201">
    <location>
        <begin position="1"/>
        <end position="115"/>
    </location>
</feature>
<keyword id="KW-0963">Cytoplasm</keyword>
<keyword id="KW-0238">DNA-binding</keyword>
<keyword id="KW-1185">Reference proteome</keyword>
<dbReference type="EMBL" id="CP000878">
    <property type="protein sequence ID" value="ABX07951.1"/>
    <property type="molecule type" value="Genomic_DNA"/>
</dbReference>
<dbReference type="RefSeq" id="WP_012194576.1">
    <property type="nucleotide sequence ID" value="NC_009976.1"/>
</dbReference>
<dbReference type="SMR" id="A9B9L9"/>
<dbReference type="STRING" id="93059.P9211_00201"/>
<dbReference type="KEGG" id="pmj:P9211_00201"/>
<dbReference type="eggNOG" id="COG0718">
    <property type="taxonomic scope" value="Bacteria"/>
</dbReference>
<dbReference type="HOGENOM" id="CLU_140930_0_1_3"/>
<dbReference type="OrthoDB" id="487780at2"/>
<dbReference type="Proteomes" id="UP000000788">
    <property type="component" value="Chromosome"/>
</dbReference>
<dbReference type="GO" id="GO:0043590">
    <property type="term" value="C:bacterial nucleoid"/>
    <property type="evidence" value="ECO:0007669"/>
    <property type="project" value="UniProtKB-UniRule"/>
</dbReference>
<dbReference type="GO" id="GO:0005829">
    <property type="term" value="C:cytosol"/>
    <property type="evidence" value="ECO:0007669"/>
    <property type="project" value="TreeGrafter"/>
</dbReference>
<dbReference type="GO" id="GO:0003677">
    <property type="term" value="F:DNA binding"/>
    <property type="evidence" value="ECO:0007669"/>
    <property type="project" value="UniProtKB-UniRule"/>
</dbReference>
<dbReference type="Gene3D" id="3.30.1310.10">
    <property type="entry name" value="Nucleoid-associated protein YbaB-like domain"/>
    <property type="match status" value="1"/>
</dbReference>
<dbReference type="HAMAP" id="MF_00274">
    <property type="entry name" value="DNA_YbaB_EbfC"/>
    <property type="match status" value="1"/>
</dbReference>
<dbReference type="InterPro" id="IPR036894">
    <property type="entry name" value="YbaB-like_sf"/>
</dbReference>
<dbReference type="InterPro" id="IPR004401">
    <property type="entry name" value="YbaB/EbfC"/>
</dbReference>
<dbReference type="NCBIfam" id="TIGR00103">
    <property type="entry name" value="DNA_YbaB_EbfC"/>
    <property type="match status" value="1"/>
</dbReference>
<dbReference type="PANTHER" id="PTHR33449">
    <property type="entry name" value="NUCLEOID-ASSOCIATED PROTEIN YBAB"/>
    <property type="match status" value="1"/>
</dbReference>
<dbReference type="PANTHER" id="PTHR33449:SF1">
    <property type="entry name" value="NUCLEOID-ASSOCIATED PROTEIN YBAB"/>
    <property type="match status" value="1"/>
</dbReference>
<dbReference type="Pfam" id="PF02575">
    <property type="entry name" value="YbaB_DNA_bd"/>
    <property type="match status" value="1"/>
</dbReference>
<dbReference type="PIRSF" id="PIRSF004555">
    <property type="entry name" value="UCP004555"/>
    <property type="match status" value="1"/>
</dbReference>
<dbReference type="SUPFAM" id="SSF82607">
    <property type="entry name" value="YbaB-like"/>
    <property type="match status" value="1"/>
</dbReference>
<accession>A9B9L9</accession>
<sequence length="115" mass="12607">MAAFGLPNFGQLTEAFKKAQQIQQDAQKLQEELDAMELEGKNQDGRVSICLSGNQLPLRIEIDPSILLEGKEKAEIAILEALKDAHELSTSTMKERMQELTGGLNLNLPGIDDGD</sequence>
<organism>
    <name type="scientific">Prochlorococcus marinus (strain MIT 9211)</name>
    <dbReference type="NCBI Taxonomy" id="93059"/>
    <lineage>
        <taxon>Bacteria</taxon>
        <taxon>Bacillati</taxon>
        <taxon>Cyanobacteriota</taxon>
        <taxon>Cyanophyceae</taxon>
        <taxon>Synechococcales</taxon>
        <taxon>Prochlorococcaceae</taxon>
        <taxon>Prochlorococcus</taxon>
    </lineage>
</organism>
<reference key="1">
    <citation type="journal article" date="2007" name="PLoS Genet.">
        <title>Patterns and implications of gene gain and loss in the evolution of Prochlorococcus.</title>
        <authorList>
            <person name="Kettler G.C."/>
            <person name="Martiny A.C."/>
            <person name="Huang K."/>
            <person name="Zucker J."/>
            <person name="Coleman M.L."/>
            <person name="Rodrigue S."/>
            <person name="Chen F."/>
            <person name="Lapidus A."/>
            <person name="Ferriera S."/>
            <person name="Johnson J."/>
            <person name="Steglich C."/>
            <person name="Church G.M."/>
            <person name="Richardson P."/>
            <person name="Chisholm S.W."/>
        </authorList>
    </citation>
    <scope>NUCLEOTIDE SEQUENCE [LARGE SCALE GENOMIC DNA]</scope>
    <source>
        <strain>MIT 9211</strain>
    </source>
</reference>
<evidence type="ECO:0000255" key="1">
    <source>
        <dbReference type="HAMAP-Rule" id="MF_00274"/>
    </source>
</evidence>